<proteinExistence type="inferred from homology"/>
<protein>
    <recommendedName>
        <fullName evidence="1">Bifunctional enzyme IspD/IspF</fullName>
    </recommendedName>
    <domain>
        <recommendedName>
            <fullName evidence="1">2-C-methyl-D-erythritol 4-phosphate cytidylyltransferase</fullName>
            <ecNumber evidence="1">2.7.7.60</ecNumber>
        </recommendedName>
        <alternativeName>
            <fullName evidence="1">4-diphosphocytidyl-2C-methyl-D-erythritol synthase</fullName>
        </alternativeName>
        <alternativeName>
            <fullName evidence="1">MEP cytidylyltransferase</fullName>
            <shortName evidence="1">MCT</shortName>
        </alternativeName>
    </domain>
    <domain>
        <recommendedName>
            <fullName evidence="1">2-C-methyl-D-erythritol 2,4-cyclodiphosphate synthase</fullName>
            <shortName evidence="1">MECDP-synthase</shortName>
            <shortName evidence="1">MECPP-synthase</shortName>
            <shortName evidence="1">MECPS</shortName>
            <ecNumber evidence="1">4.6.1.12</ecNumber>
        </recommendedName>
    </domain>
</protein>
<gene>
    <name evidence="1" type="primary">ispDF</name>
    <name type="ordered locus">BT_0870</name>
</gene>
<organism>
    <name type="scientific">Bartonella tribocorum (strain CIP 105476 / IBS 506)</name>
    <dbReference type="NCBI Taxonomy" id="382640"/>
    <lineage>
        <taxon>Bacteria</taxon>
        <taxon>Pseudomonadati</taxon>
        <taxon>Pseudomonadota</taxon>
        <taxon>Alphaproteobacteria</taxon>
        <taxon>Hyphomicrobiales</taxon>
        <taxon>Bartonellaceae</taxon>
        <taxon>Bartonella</taxon>
    </lineage>
</organism>
<keyword id="KW-0414">Isoprene biosynthesis</keyword>
<keyword id="KW-0456">Lyase</keyword>
<keyword id="KW-0479">Metal-binding</keyword>
<keyword id="KW-0511">Multifunctional enzyme</keyword>
<keyword id="KW-0548">Nucleotidyltransferase</keyword>
<keyword id="KW-0808">Transferase</keyword>
<evidence type="ECO:0000255" key="1">
    <source>
        <dbReference type="HAMAP-Rule" id="MF_01520"/>
    </source>
</evidence>
<comment type="function">
    <text evidence="1">Bifunctional enzyme that catalyzes the formation of 4-diphosphocytidyl-2-C-methyl-D-erythritol from CTP and 2-C-methyl-D-erythritol 4-phosphate (MEP) (IspD), and catalyzes the conversion of 4-diphosphocytidyl-2-C-methyl-D-erythritol 2-phosphate (CDP-ME2P) to 2-C-methyl-D-erythritol 2,4-cyclodiphosphate (ME-CPP) with a corresponding release of cytidine 5-monophosphate (CMP) (IspF).</text>
</comment>
<comment type="catalytic activity">
    <reaction evidence="1">
        <text>2-C-methyl-D-erythritol 4-phosphate + CTP + H(+) = 4-CDP-2-C-methyl-D-erythritol + diphosphate</text>
        <dbReference type="Rhea" id="RHEA:13429"/>
        <dbReference type="ChEBI" id="CHEBI:15378"/>
        <dbReference type="ChEBI" id="CHEBI:33019"/>
        <dbReference type="ChEBI" id="CHEBI:37563"/>
        <dbReference type="ChEBI" id="CHEBI:57823"/>
        <dbReference type="ChEBI" id="CHEBI:58262"/>
        <dbReference type="EC" id="2.7.7.60"/>
    </reaction>
</comment>
<comment type="catalytic activity">
    <reaction evidence="1">
        <text>4-CDP-2-C-methyl-D-erythritol 2-phosphate = 2-C-methyl-D-erythritol 2,4-cyclic diphosphate + CMP</text>
        <dbReference type="Rhea" id="RHEA:23864"/>
        <dbReference type="ChEBI" id="CHEBI:57919"/>
        <dbReference type="ChEBI" id="CHEBI:58483"/>
        <dbReference type="ChEBI" id="CHEBI:60377"/>
        <dbReference type="EC" id="4.6.1.12"/>
    </reaction>
</comment>
<comment type="cofactor">
    <cofactor evidence="1">
        <name>a divalent metal cation</name>
        <dbReference type="ChEBI" id="CHEBI:60240"/>
    </cofactor>
</comment>
<comment type="pathway">
    <text evidence="1">Isoprenoid biosynthesis; isopentenyl diphosphate biosynthesis via DXP pathway; isopentenyl diphosphate from 1-deoxy-D-xylulose 5-phosphate: step 2/6.</text>
</comment>
<comment type="pathway">
    <text evidence="1">Isoprenoid biosynthesis; isopentenyl diphosphate biosynthesis via DXP pathway; isopentenyl diphosphate from 1-deoxy-D-xylulose 5-phosphate: step 4/6.</text>
</comment>
<comment type="similarity">
    <text evidence="1">In the N-terminal section; belongs to the IspD/TarI cytidylyltransferase family. IspD subfamily.</text>
</comment>
<comment type="similarity">
    <text evidence="1">In the C-terminal section; belongs to the IspF family.</text>
</comment>
<feature type="chain" id="PRO_0000333304" description="Bifunctional enzyme IspD/IspF">
    <location>
        <begin position="1"/>
        <end position="398"/>
    </location>
</feature>
<feature type="region of interest" description="2-C-methyl-D-erythritol 4-phosphate cytidylyltransferase" evidence="1">
    <location>
        <begin position="1"/>
        <end position="237"/>
    </location>
</feature>
<feature type="region of interest" description="2-C-methyl-D-erythritol 2,4-cyclodiphosphate synthase" evidence="1">
    <location>
        <begin position="238"/>
        <end position="398"/>
    </location>
</feature>
<feature type="binding site" evidence="1">
    <location>
        <begin position="244"/>
        <end position="246"/>
    </location>
    <ligand>
        <name>4-CDP-2-C-methyl-D-erythritol 2-phosphate</name>
        <dbReference type="ChEBI" id="CHEBI:57919"/>
    </ligand>
</feature>
<feature type="binding site" evidence="1">
    <location>
        <position position="244"/>
    </location>
    <ligand>
        <name>a divalent metal cation</name>
        <dbReference type="ChEBI" id="CHEBI:60240"/>
    </ligand>
</feature>
<feature type="binding site" evidence="1">
    <location>
        <position position="246"/>
    </location>
    <ligand>
        <name>a divalent metal cation</name>
        <dbReference type="ChEBI" id="CHEBI:60240"/>
    </ligand>
</feature>
<feature type="binding site" evidence="1">
    <location>
        <begin position="270"/>
        <end position="271"/>
    </location>
    <ligand>
        <name>4-CDP-2-C-methyl-D-erythritol 2-phosphate</name>
        <dbReference type="ChEBI" id="CHEBI:57919"/>
    </ligand>
</feature>
<feature type="binding site" evidence="1">
    <location>
        <position position="278"/>
    </location>
    <ligand>
        <name>a divalent metal cation</name>
        <dbReference type="ChEBI" id="CHEBI:60240"/>
    </ligand>
</feature>
<feature type="binding site" evidence="1">
    <location>
        <begin position="292"/>
        <end position="294"/>
    </location>
    <ligand>
        <name>4-CDP-2-C-methyl-D-erythritol 2-phosphate</name>
        <dbReference type="ChEBI" id="CHEBI:57919"/>
    </ligand>
</feature>
<feature type="binding site" evidence="1">
    <location>
        <begin position="368"/>
        <end position="371"/>
    </location>
    <ligand>
        <name>4-CDP-2-C-methyl-D-erythritol 2-phosphate</name>
        <dbReference type="ChEBI" id="CHEBI:57919"/>
    </ligand>
</feature>
<feature type="binding site" evidence="1">
    <location>
        <position position="375"/>
    </location>
    <ligand>
        <name>4-CDP-2-C-methyl-D-erythritol 2-phosphate</name>
        <dbReference type="ChEBI" id="CHEBI:57919"/>
    </ligand>
</feature>
<feature type="binding site" evidence="1">
    <location>
        <position position="378"/>
    </location>
    <ligand>
        <name>4-CDP-2-C-methyl-D-erythritol 2-phosphate</name>
        <dbReference type="ChEBI" id="CHEBI:57919"/>
    </ligand>
</feature>
<feature type="site" description="Transition state stabilizer" evidence="1">
    <location>
        <position position="17"/>
    </location>
</feature>
<feature type="site" description="Transition state stabilizer" evidence="1">
    <location>
        <position position="26"/>
    </location>
</feature>
<feature type="site" description="Positions MEP for the nucleophilic attack" evidence="1">
    <location>
        <position position="156"/>
    </location>
</feature>
<feature type="site" description="Positions MEP for the nucleophilic attack" evidence="1">
    <location>
        <position position="213"/>
    </location>
</feature>
<feature type="site" description="Transition state stabilizer" evidence="1">
    <location>
        <position position="270"/>
    </location>
</feature>
<feature type="site" description="Transition state stabilizer" evidence="1">
    <location>
        <position position="369"/>
    </location>
</feature>
<accession>A9IS87</accession>
<reference key="1">
    <citation type="journal article" date="2007" name="Nat. Genet.">
        <title>Genomic analysis of Bartonella identifies type IV secretion systems as host adaptability factors.</title>
        <authorList>
            <person name="Saenz H.L."/>
            <person name="Engel P."/>
            <person name="Stoeckli M.C."/>
            <person name="Lanz C."/>
            <person name="Raddatz G."/>
            <person name="Vayssier-Taussat M."/>
            <person name="Birtles R."/>
            <person name="Schuster S.C."/>
            <person name="Dehio C."/>
        </authorList>
    </citation>
    <scope>NUCLEOTIDE SEQUENCE [LARGE SCALE GENOMIC DNA]</scope>
    <source>
        <strain>CIP 105476 / IBS 506</strain>
    </source>
</reference>
<dbReference type="EC" id="2.7.7.60" evidence="1"/>
<dbReference type="EC" id="4.6.1.12" evidence="1"/>
<dbReference type="EMBL" id="AM260525">
    <property type="protein sequence ID" value="CAK01274.1"/>
    <property type="molecule type" value="Genomic_DNA"/>
</dbReference>
<dbReference type="RefSeq" id="WP_012231424.1">
    <property type="nucleotide sequence ID" value="NC_010161.1"/>
</dbReference>
<dbReference type="SMR" id="A9IS87"/>
<dbReference type="KEGG" id="btr:BT_0870"/>
<dbReference type="eggNOG" id="COG0245">
    <property type="taxonomic scope" value="Bacteria"/>
</dbReference>
<dbReference type="HOGENOM" id="CLU_042800_1_1_5"/>
<dbReference type="UniPathway" id="UPA00056">
    <property type="reaction ID" value="UER00093"/>
</dbReference>
<dbReference type="UniPathway" id="UPA00056">
    <property type="reaction ID" value="UER00095"/>
</dbReference>
<dbReference type="Proteomes" id="UP000001592">
    <property type="component" value="Chromosome"/>
</dbReference>
<dbReference type="GO" id="GO:0008685">
    <property type="term" value="F:2-C-methyl-D-erythritol 2,4-cyclodiphosphate synthase activity"/>
    <property type="evidence" value="ECO:0007669"/>
    <property type="project" value="UniProtKB-UniRule"/>
</dbReference>
<dbReference type="GO" id="GO:0050518">
    <property type="term" value="F:2-C-methyl-D-erythritol 4-phosphate cytidylyltransferase activity"/>
    <property type="evidence" value="ECO:0007669"/>
    <property type="project" value="UniProtKB-UniRule"/>
</dbReference>
<dbReference type="GO" id="GO:0046872">
    <property type="term" value="F:metal ion binding"/>
    <property type="evidence" value="ECO:0007669"/>
    <property type="project" value="UniProtKB-KW"/>
</dbReference>
<dbReference type="GO" id="GO:0019288">
    <property type="term" value="P:isopentenyl diphosphate biosynthetic process, methylerythritol 4-phosphate pathway"/>
    <property type="evidence" value="ECO:0007669"/>
    <property type="project" value="UniProtKB-UniRule"/>
</dbReference>
<dbReference type="GO" id="GO:0016114">
    <property type="term" value="P:terpenoid biosynthetic process"/>
    <property type="evidence" value="ECO:0007669"/>
    <property type="project" value="InterPro"/>
</dbReference>
<dbReference type="CDD" id="cd02516">
    <property type="entry name" value="CDP-ME_synthetase"/>
    <property type="match status" value="1"/>
</dbReference>
<dbReference type="CDD" id="cd00554">
    <property type="entry name" value="MECDP_synthase"/>
    <property type="match status" value="1"/>
</dbReference>
<dbReference type="FunFam" id="3.90.550.10:FF:000003">
    <property type="entry name" value="2-C-methyl-D-erythritol 4-phosphate cytidylyltransferase"/>
    <property type="match status" value="1"/>
</dbReference>
<dbReference type="Gene3D" id="3.30.1330.50">
    <property type="entry name" value="2-C-methyl-D-erythritol 2,4-cyclodiphosphate synthase"/>
    <property type="match status" value="1"/>
</dbReference>
<dbReference type="Gene3D" id="3.90.550.10">
    <property type="entry name" value="Spore Coat Polysaccharide Biosynthesis Protein SpsA, Chain A"/>
    <property type="match status" value="1"/>
</dbReference>
<dbReference type="HAMAP" id="MF_00108">
    <property type="entry name" value="IspD"/>
    <property type="match status" value="1"/>
</dbReference>
<dbReference type="HAMAP" id="MF_01520">
    <property type="entry name" value="IspDF"/>
    <property type="match status" value="1"/>
</dbReference>
<dbReference type="HAMAP" id="MF_00107">
    <property type="entry name" value="IspF"/>
    <property type="match status" value="1"/>
</dbReference>
<dbReference type="InterPro" id="IPR001228">
    <property type="entry name" value="IspD"/>
</dbReference>
<dbReference type="InterPro" id="IPR026596">
    <property type="entry name" value="IspD/F"/>
</dbReference>
<dbReference type="InterPro" id="IPR034683">
    <property type="entry name" value="IspD/TarI"/>
</dbReference>
<dbReference type="InterPro" id="IPR003526">
    <property type="entry name" value="MECDP_synthase"/>
</dbReference>
<dbReference type="InterPro" id="IPR020555">
    <property type="entry name" value="MECDP_synthase_CS"/>
</dbReference>
<dbReference type="InterPro" id="IPR036571">
    <property type="entry name" value="MECDP_synthase_sf"/>
</dbReference>
<dbReference type="InterPro" id="IPR029044">
    <property type="entry name" value="Nucleotide-diphossugar_trans"/>
</dbReference>
<dbReference type="NCBIfam" id="TIGR00453">
    <property type="entry name" value="ispD"/>
    <property type="match status" value="1"/>
</dbReference>
<dbReference type="NCBIfam" id="TIGR00151">
    <property type="entry name" value="ispF"/>
    <property type="match status" value="1"/>
</dbReference>
<dbReference type="NCBIfam" id="NF006899">
    <property type="entry name" value="PRK09382.1"/>
    <property type="match status" value="1"/>
</dbReference>
<dbReference type="PANTHER" id="PTHR43181">
    <property type="entry name" value="2-C-METHYL-D-ERYTHRITOL 2,4-CYCLODIPHOSPHATE SYNTHASE, CHLOROPLASTIC"/>
    <property type="match status" value="1"/>
</dbReference>
<dbReference type="PANTHER" id="PTHR43181:SF1">
    <property type="entry name" value="2-C-METHYL-D-ERYTHRITOL 2,4-CYCLODIPHOSPHATE SYNTHASE, CHLOROPLASTIC"/>
    <property type="match status" value="1"/>
</dbReference>
<dbReference type="Pfam" id="PF01128">
    <property type="entry name" value="IspD"/>
    <property type="match status" value="1"/>
</dbReference>
<dbReference type="Pfam" id="PF02542">
    <property type="entry name" value="YgbB"/>
    <property type="match status" value="1"/>
</dbReference>
<dbReference type="SUPFAM" id="SSF69765">
    <property type="entry name" value="IpsF-like"/>
    <property type="match status" value="1"/>
</dbReference>
<dbReference type="SUPFAM" id="SSF53448">
    <property type="entry name" value="Nucleotide-diphospho-sugar transferases"/>
    <property type="match status" value="1"/>
</dbReference>
<dbReference type="PROSITE" id="PS01350">
    <property type="entry name" value="ISPF"/>
    <property type="match status" value="1"/>
</dbReference>
<name>ISPDF_BART1</name>
<sequence length="398" mass="44458">MSISIAAIILAAGRGERAGSPHKIPKQYRLLGKKPIIYHTVCRFLRHPAITTIILVIHPEDRQICEQALAEFKERFIIVEGGSTRQISTLHGLQALKKFNPQYVHIHDGARPFIENELLDNIHNTLTPQEGVLPVLPISDTLKRVNHQYVLETIPRTHLYSAQTPQCFPFEPILAAHKQAKRVCKEDFTDDCAIAEWFGLPMRTIPGDPHNIKITWHKDFDTAHLYLQKKMQMFPDIRVGNGYDVHSFEEGDFLILCGIRIPFHKKLNGHSDADVALHALTDALLATRGAGDIGTHFPPSDPQWKNVSSEIFLRHALSLLKQAGGRIANVDITVIAENPKIGPYRHAMIENLMTILAITPDRISIKATTNERLGFIGRGEGIAALATASVLYPGEIPQ</sequence>